<comment type="function">
    <text evidence="2">Probable multifunctional globin with a hexacoordinated heme iron required for the catalysis of various reactions depending on redox condition of the cell as well as oxygen availability. Has a nitric oxide dioxygenase (NOD) activity and is most probably involved in cell-mediated and oxygen-dependent nitric oxide consumption. Under normoxic conditions functions as a nitric oxide dioxygenase (NOD) but under hypoxic conditions the globin may switch its function to that of a nitrite (NO2) reductase (NiR), generating nitric oxide. Could also have peroxidase and superoxide dismutase activities, detoxifying reactive oxygen species and protecting cells against oxidative stress. Also binds dioxygen with low affinity and could function as an oxygen sensor but has probably no function as a respiratory oxygen carrier.</text>
</comment>
<comment type="catalytic activity">
    <reaction evidence="2">
        <text>Fe(II)-heme b-[protein] + nitric oxide + O2 = Fe(III)-heme b-[protein] + nitrate</text>
        <dbReference type="Rhea" id="RHEA:78091"/>
        <dbReference type="Rhea" id="RHEA-COMP:18975"/>
        <dbReference type="Rhea" id="RHEA-COMP:18976"/>
        <dbReference type="ChEBI" id="CHEBI:15379"/>
        <dbReference type="ChEBI" id="CHEBI:16480"/>
        <dbReference type="ChEBI" id="CHEBI:17632"/>
        <dbReference type="ChEBI" id="CHEBI:55376"/>
        <dbReference type="ChEBI" id="CHEBI:60344"/>
    </reaction>
    <physiologicalReaction direction="left-to-right" evidence="2">
        <dbReference type="Rhea" id="RHEA:78092"/>
    </physiologicalReaction>
</comment>
<comment type="catalytic activity">
    <reaction evidence="2">
        <text>Fe(III)-heme b-[protein] + nitric oxide + H2O = Fe(II)-heme b-[protein] + nitrite + 2 H(+)</text>
        <dbReference type="Rhea" id="RHEA:77711"/>
        <dbReference type="Rhea" id="RHEA-COMP:18975"/>
        <dbReference type="Rhea" id="RHEA-COMP:18976"/>
        <dbReference type="ChEBI" id="CHEBI:15377"/>
        <dbReference type="ChEBI" id="CHEBI:15378"/>
        <dbReference type="ChEBI" id="CHEBI:16301"/>
        <dbReference type="ChEBI" id="CHEBI:16480"/>
        <dbReference type="ChEBI" id="CHEBI:55376"/>
        <dbReference type="ChEBI" id="CHEBI:60344"/>
    </reaction>
    <physiologicalReaction direction="right-to-left" evidence="2">
        <dbReference type="Rhea" id="RHEA:77713"/>
    </physiologicalReaction>
</comment>
<comment type="catalytic activity">
    <reaction evidence="2">
        <text>2 superoxide + 2 H(+) = H2O2 + O2</text>
        <dbReference type="Rhea" id="RHEA:20696"/>
        <dbReference type="ChEBI" id="CHEBI:15378"/>
        <dbReference type="ChEBI" id="CHEBI:15379"/>
        <dbReference type="ChEBI" id="CHEBI:16240"/>
        <dbReference type="ChEBI" id="CHEBI:18421"/>
        <dbReference type="EC" id="1.15.1.1"/>
    </reaction>
    <physiologicalReaction direction="left-to-right" evidence="2">
        <dbReference type="Rhea" id="RHEA:20697"/>
    </physiologicalReaction>
</comment>
<comment type="catalytic activity">
    <reaction evidence="2">
        <text>H2O2 + AH2 = A + 2 H2O</text>
        <dbReference type="Rhea" id="RHEA:30275"/>
        <dbReference type="ChEBI" id="CHEBI:13193"/>
        <dbReference type="ChEBI" id="CHEBI:15377"/>
        <dbReference type="ChEBI" id="CHEBI:16240"/>
        <dbReference type="ChEBI" id="CHEBI:17499"/>
    </reaction>
    <physiologicalReaction direction="left-to-right" evidence="2">
        <dbReference type="Rhea" id="RHEA:30276"/>
    </physiologicalReaction>
</comment>
<comment type="subunit">
    <text evidence="2">Monomeric.</text>
</comment>
<comment type="subcellular location">
    <subcellularLocation>
        <location evidence="2">Cytoplasm</location>
    </subcellularLocation>
    <subcellularLocation>
        <location evidence="2">Nucleus</location>
    </subcellularLocation>
</comment>
<comment type="similarity">
    <text evidence="3">Belongs to the globin family.</text>
</comment>
<organism>
    <name type="scientific">Oryzias latipes</name>
    <name type="common">Japanese rice fish</name>
    <name type="synonym">Japanese killifish</name>
    <dbReference type="NCBI Taxonomy" id="8090"/>
    <lineage>
        <taxon>Eukaryota</taxon>
        <taxon>Metazoa</taxon>
        <taxon>Chordata</taxon>
        <taxon>Craniata</taxon>
        <taxon>Vertebrata</taxon>
        <taxon>Euteleostomi</taxon>
        <taxon>Actinopterygii</taxon>
        <taxon>Neopterygii</taxon>
        <taxon>Teleostei</taxon>
        <taxon>Neoteleostei</taxon>
        <taxon>Acanthomorphata</taxon>
        <taxon>Ovalentaria</taxon>
        <taxon>Atherinomorphae</taxon>
        <taxon>Beloniformes</taxon>
        <taxon>Adrianichthyidae</taxon>
        <taxon>Oryziinae</taxon>
        <taxon>Oryzias</taxon>
    </lineage>
</organism>
<dbReference type="EC" id="1.14.12.-" evidence="2"/>
<dbReference type="EC" id="1.7.-.-" evidence="2"/>
<dbReference type="EC" id="1.11.1.-" evidence="2"/>
<dbReference type="EC" id="1.15.1.1" evidence="2"/>
<dbReference type="EMBL" id="AJ635227">
    <property type="protein sequence ID" value="CAG25610.1"/>
    <property type="molecule type" value="mRNA"/>
</dbReference>
<dbReference type="RefSeq" id="NP_001098237.1">
    <property type="nucleotide sequence ID" value="NM_001104767.1"/>
</dbReference>
<dbReference type="RefSeq" id="XP_011476171.1">
    <property type="nucleotide sequence ID" value="XM_011477869.3"/>
</dbReference>
<dbReference type="SMR" id="Q575T0"/>
<dbReference type="STRING" id="8090.ENSORLP00000015610"/>
<dbReference type="Ensembl" id="ENSORLT00000015611.2">
    <property type="protein sequence ID" value="ENSORLP00000015610.2"/>
    <property type="gene ID" value="ENSORLG00000012468.2"/>
</dbReference>
<dbReference type="Ensembl" id="ENSORLT00000015613.2">
    <property type="protein sequence ID" value="ENSORLP00000015612.2"/>
    <property type="gene ID" value="ENSORLG00000012468.2"/>
</dbReference>
<dbReference type="GeneID" id="100049376"/>
<dbReference type="KEGG" id="ola:100049376"/>
<dbReference type="CTD" id="246090"/>
<dbReference type="eggNOG" id="KOG3378">
    <property type="taxonomic scope" value="Eukaryota"/>
</dbReference>
<dbReference type="GeneTree" id="ENSGT00940000155004"/>
<dbReference type="InParanoid" id="Q575T0"/>
<dbReference type="OrthoDB" id="436496at2759"/>
<dbReference type="Proteomes" id="UP000001038">
    <property type="component" value="Chromosome 8"/>
</dbReference>
<dbReference type="Proteomes" id="UP000265180">
    <property type="component" value="Unplaced"/>
</dbReference>
<dbReference type="Proteomes" id="UP000265200">
    <property type="component" value="Unplaced"/>
</dbReference>
<dbReference type="Bgee" id="ENSORLG00000012468">
    <property type="expression patterns" value="Expressed in intestine and 12 other cell types or tissues"/>
</dbReference>
<dbReference type="GO" id="GO:0005737">
    <property type="term" value="C:cytoplasm"/>
    <property type="evidence" value="ECO:0000250"/>
    <property type="project" value="UniProtKB"/>
</dbReference>
<dbReference type="GO" id="GO:0005634">
    <property type="term" value="C:nucleus"/>
    <property type="evidence" value="ECO:0000250"/>
    <property type="project" value="UniProtKB"/>
</dbReference>
<dbReference type="GO" id="GO:0020037">
    <property type="term" value="F:heme binding"/>
    <property type="evidence" value="ECO:0000318"/>
    <property type="project" value="GO_Central"/>
</dbReference>
<dbReference type="GO" id="GO:0005506">
    <property type="term" value="F:iron ion binding"/>
    <property type="evidence" value="ECO:0007669"/>
    <property type="project" value="InterPro"/>
</dbReference>
<dbReference type="GO" id="GO:0141118">
    <property type="term" value="F:nitric oxide dioxygenase activity, heme protein as donor"/>
    <property type="evidence" value="ECO:0000250"/>
    <property type="project" value="UniProtKB"/>
</dbReference>
<dbReference type="GO" id="GO:0098809">
    <property type="term" value="F:nitrite reductase activity"/>
    <property type="evidence" value="ECO:0000250"/>
    <property type="project" value="UniProtKB"/>
</dbReference>
<dbReference type="GO" id="GO:0016491">
    <property type="term" value="F:oxidoreductase activity"/>
    <property type="evidence" value="ECO:0000318"/>
    <property type="project" value="GO_Central"/>
</dbReference>
<dbReference type="GO" id="GO:0019825">
    <property type="term" value="F:oxygen binding"/>
    <property type="evidence" value="ECO:0007669"/>
    <property type="project" value="InterPro"/>
</dbReference>
<dbReference type="GO" id="GO:0004784">
    <property type="term" value="F:superoxide dismutase activity"/>
    <property type="evidence" value="ECO:0000250"/>
    <property type="project" value="UniProtKB"/>
</dbReference>
<dbReference type="GO" id="GO:0046210">
    <property type="term" value="P:nitric oxide catabolic process"/>
    <property type="evidence" value="ECO:0000250"/>
    <property type="project" value="UniProtKB"/>
</dbReference>
<dbReference type="GO" id="GO:0015671">
    <property type="term" value="P:oxygen transport"/>
    <property type="evidence" value="ECO:0007669"/>
    <property type="project" value="InterPro"/>
</dbReference>
<dbReference type="GO" id="GO:0019430">
    <property type="term" value="P:removal of superoxide radicals"/>
    <property type="evidence" value="ECO:0000250"/>
    <property type="project" value="UniProtKB"/>
</dbReference>
<dbReference type="CDD" id="cd08924">
    <property type="entry name" value="Cygb"/>
    <property type="match status" value="1"/>
</dbReference>
<dbReference type="Gene3D" id="1.10.490.10">
    <property type="entry name" value="Globins"/>
    <property type="match status" value="1"/>
</dbReference>
<dbReference type="InterPro" id="IPR000971">
    <property type="entry name" value="Globin"/>
</dbReference>
<dbReference type="InterPro" id="IPR009050">
    <property type="entry name" value="Globin-like_sf"/>
</dbReference>
<dbReference type="InterPro" id="IPR012292">
    <property type="entry name" value="Globin/Proto"/>
</dbReference>
<dbReference type="InterPro" id="IPR013314">
    <property type="entry name" value="Globin_lamprey/hagfish"/>
</dbReference>
<dbReference type="PANTHER" id="PTHR46783">
    <property type="entry name" value="CYTOGLOBIN"/>
    <property type="match status" value="1"/>
</dbReference>
<dbReference type="PANTHER" id="PTHR46783:SF1">
    <property type="entry name" value="CYTOGLOBIN-1-RELATED"/>
    <property type="match status" value="1"/>
</dbReference>
<dbReference type="Pfam" id="PF00042">
    <property type="entry name" value="Globin"/>
    <property type="match status" value="1"/>
</dbReference>
<dbReference type="PRINTS" id="PR01906">
    <property type="entry name" value="FISHGLOBIN"/>
</dbReference>
<dbReference type="SUPFAM" id="SSF46458">
    <property type="entry name" value="Globin-like"/>
    <property type="match status" value="1"/>
</dbReference>
<dbReference type="PROSITE" id="PS01033">
    <property type="entry name" value="GLOBIN"/>
    <property type="match status" value="1"/>
</dbReference>
<proteinExistence type="evidence at transcript level"/>
<name>CYGB1_ORYLA</name>
<gene>
    <name evidence="1" type="primary">cygb1</name>
    <name evidence="4" type="synonym">cygb-1</name>
</gene>
<feature type="chain" id="PRO_0000262320" description="Cytoglobin-1">
    <location>
        <begin position="1"/>
        <end position="177"/>
    </location>
</feature>
<feature type="domain" description="Globin" evidence="3">
    <location>
        <begin position="16"/>
        <end position="165"/>
    </location>
</feature>
<feature type="binding site" description="distal binding residue" evidence="2 3">
    <location>
        <position position="79"/>
    </location>
    <ligand>
        <name>heme b</name>
        <dbReference type="ChEBI" id="CHEBI:60344"/>
    </ligand>
    <ligandPart>
        <name>Fe</name>
        <dbReference type="ChEBI" id="CHEBI:18248"/>
    </ligandPart>
</feature>
<feature type="binding site" description="proximal binding residue" evidence="2 3">
    <location>
        <position position="111"/>
    </location>
    <ligand>
        <name>heme b</name>
        <dbReference type="ChEBI" id="CHEBI:60344"/>
    </ligand>
    <ligandPart>
        <name>Fe</name>
        <dbReference type="ChEBI" id="CHEBI:18248"/>
    </ligandPart>
</feature>
<reference evidence="4" key="1">
    <citation type="journal article" date="2005" name="Biochem. Biophys. Res. Commun.">
        <title>Duplicated cytoglobin genes in teleost fishes.</title>
        <authorList>
            <person name="Fuchs C."/>
            <person name="Luckhardt A."/>
            <person name="Gerlach F."/>
            <person name="Burmester T."/>
            <person name="Hankeln T."/>
        </authorList>
    </citation>
    <scope>NUCLEOTIDE SEQUENCE [MRNA]</scope>
</reference>
<sequence>MERKQGEVDHLERSRPLTDKERVMIQDSWAKVYQNCDDAGVAILVRLFVNFPSSKQYFSQFKHIEDAEELEKSSQLRKHARRVMNAINTLVESLDNSDKVSSVLNAVGKAHAIRHKVDPVYFKILSGVILEVLGEAYPQVMTAEVASAWTNLLAILCCSIKAVYEELGWPHLSNSTS</sequence>
<keyword id="KW-0963">Cytoplasm</keyword>
<keyword id="KW-0349">Heme</keyword>
<keyword id="KW-0408">Iron</keyword>
<keyword id="KW-0479">Metal-binding</keyword>
<keyword id="KW-0539">Nucleus</keyword>
<keyword id="KW-0560">Oxidoreductase</keyword>
<keyword id="KW-1185">Reference proteome</keyword>
<evidence type="ECO:0000250" key="1">
    <source>
        <dbReference type="UniProtKB" id="Q8UUR3"/>
    </source>
</evidence>
<evidence type="ECO:0000250" key="2">
    <source>
        <dbReference type="UniProtKB" id="Q8WWM9"/>
    </source>
</evidence>
<evidence type="ECO:0000255" key="3">
    <source>
        <dbReference type="PROSITE-ProRule" id="PRU00238"/>
    </source>
</evidence>
<evidence type="ECO:0000312" key="4">
    <source>
        <dbReference type="EMBL" id="CAG25610.1"/>
    </source>
</evidence>
<protein>
    <recommendedName>
        <fullName>Cytoglobin-1</fullName>
    </recommendedName>
    <alternativeName>
        <fullName>Nitric oxygen dioxygenase CYGB</fullName>
        <ecNumber evidence="2">1.14.12.-</ecNumber>
    </alternativeName>
    <alternativeName>
        <fullName>Nitrite reductase CYGB</fullName>
        <ecNumber evidence="2">1.7.-.-</ecNumber>
    </alternativeName>
    <alternativeName>
        <fullName>Pseudoperoxidase CYGB</fullName>
        <ecNumber evidence="2">1.11.1.-</ecNumber>
    </alternativeName>
    <alternativeName>
        <fullName>Superoxide dismutase CYGB</fullName>
        <ecNumber evidence="2">1.15.1.1</ecNumber>
    </alternativeName>
</protein>
<accession>Q575T0</accession>